<organism>
    <name type="scientific">Salmonella typhimurium (strain LT2 / SGSC1412 / ATCC 700720)</name>
    <dbReference type="NCBI Taxonomy" id="99287"/>
    <lineage>
        <taxon>Bacteria</taxon>
        <taxon>Pseudomonadati</taxon>
        <taxon>Pseudomonadota</taxon>
        <taxon>Gammaproteobacteria</taxon>
        <taxon>Enterobacterales</taxon>
        <taxon>Enterobacteriaceae</taxon>
        <taxon>Salmonella</taxon>
    </lineage>
</organism>
<name>HILD_SALTY</name>
<protein>
    <recommendedName>
        <fullName>Transcriptional regulator HilD</fullName>
    </recommendedName>
</protein>
<comment type="function">
    <text evidence="2">Activates the expression of genes on pathogenicity island 1 (SPI1) that encode virulence proteins involved in invasion of host cells.</text>
</comment>
<comment type="disruption phenotype">
    <text evidence="2">Decreases invasion of host cells.</text>
</comment>
<comment type="sequence caution" evidence="4">
    <conflict type="frameshift">
        <sequence resource="EMBL-CDS" id="AAB60187"/>
    </conflict>
</comment>
<accession>P0CL08</accession>
<accession>P41782</accession>
<accession>Q9X5C3</accession>
<gene>
    <name type="primary">hilD</name>
    <name type="ordered locus">STM2875</name>
</gene>
<reference key="1">
    <citation type="journal article" date="2001" name="Nature">
        <title>Complete genome sequence of Salmonella enterica serovar Typhimurium LT2.</title>
        <authorList>
            <person name="McClelland M."/>
            <person name="Sanderson K.E."/>
            <person name="Spieth J."/>
            <person name="Clifton S.W."/>
            <person name="Latreille P."/>
            <person name="Courtney L."/>
            <person name="Porwollik S."/>
            <person name="Ali J."/>
            <person name="Dante M."/>
            <person name="Du F."/>
            <person name="Hou S."/>
            <person name="Layman D."/>
            <person name="Leonard S."/>
            <person name="Nguyen C."/>
            <person name="Scott K."/>
            <person name="Holmes A."/>
            <person name="Grewal N."/>
            <person name="Mulvaney E."/>
            <person name="Ryan E."/>
            <person name="Sun H."/>
            <person name="Florea L."/>
            <person name="Miller W."/>
            <person name="Stoneking T."/>
            <person name="Nhan M."/>
            <person name="Waterston R."/>
            <person name="Wilson R.K."/>
        </authorList>
    </citation>
    <scope>NUCLEOTIDE SEQUENCE [LARGE SCALE GENOMIC DNA]</scope>
    <source>
        <strain>LT2 / SGSC1412 / ATCC 700720</strain>
    </source>
</reference>
<reference key="2">
    <citation type="journal article" date="1995" name="Mol. Microbiol.">
        <title>PhoP/PhoQ transcriptional repression of Salmonella typhimurium invasion genes: evidence for a role in protein secretion.</title>
        <authorList>
            <person name="Pegues D.A."/>
            <person name="Hantman M.J."/>
            <person name="Behlau I."/>
            <person name="Miller S.I."/>
        </authorList>
    </citation>
    <scope>NUCLEOTIDE SEQUENCE [GENOMIC DNA] OF 1-225</scope>
    <source>
        <strain>ATCC 14028s / SGSG 2262</strain>
    </source>
</reference>
<reference key="3">
    <citation type="journal article" date="2017" name="PLoS Pathog.">
        <title>The transcriptional regulator SsrB is involved in a molecular switch controlling virulence lifestyles of Salmonella.</title>
        <authorList>
            <person name="Perez-Morales D."/>
            <person name="Banda M.M."/>
            <person name="Chau N.Y.E."/>
            <person name="Salgado H."/>
            <person name="Martinez-Flores I."/>
            <person name="Ibarra J.A."/>
            <person name="Ilyas B."/>
            <person name="Coombes B.K."/>
            <person name="Bustamante V.H."/>
        </authorList>
    </citation>
    <scope>FUNCTION</scope>
    <scope>DISRUPTION PHENOTYPE</scope>
    <source>
        <strain evidence="3">SL1344</strain>
    </source>
</reference>
<proteinExistence type="predicted"/>
<keyword id="KW-0010">Activator</keyword>
<keyword id="KW-0238">DNA-binding</keyword>
<keyword id="KW-1185">Reference proteome</keyword>
<keyword id="KW-0804">Transcription</keyword>
<keyword id="KW-0805">Transcription regulation</keyword>
<feature type="chain" id="PRO_0000194524" description="Transcriptional regulator HilD">
    <location>
        <begin position="1"/>
        <end position="309"/>
    </location>
</feature>
<feature type="domain" description="HTH araC/xylS-type" evidence="1">
    <location>
        <begin position="209"/>
        <end position="306"/>
    </location>
</feature>
<feature type="DNA-binding region" description="H-T-H motif" evidence="1">
    <location>
        <begin position="226"/>
        <end position="247"/>
    </location>
</feature>
<feature type="DNA-binding region" description="H-T-H motif" evidence="1">
    <location>
        <begin position="273"/>
        <end position="296"/>
    </location>
</feature>
<feature type="sequence conflict" description="In Ref. 2; AAB60187." evidence="4" ref="2">
    <location>
        <begin position="182"/>
        <end position="183"/>
    </location>
</feature>
<evidence type="ECO:0000255" key="1">
    <source>
        <dbReference type="PROSITE-ProRule" id="PRU00593"/>
    </source>
</evidence>
<evidence type="ECO:0000269" key="2">
    <source>
    </source>
</evidence>
<evidence type="ECO:0000303" key="3">
    <source>
    </source>
</evidence>
<evidence type="ECO:0000305" key="4"/>
<dbReference type="EMBL" id="AE006468">
    <property type="protein sequence ID" value="AAL21755.1"/>
    <property type="molecule type" value="Genomic_DNA"/>
</dbReference>
<dbReference type="EMBL" id="U21676">
    <property type="protein sequence ID" value="AAB60187.1"/>
    <property type="status" value="ALT_FRAME"/>
    <property type="molecule type" value="Genomic_DNA"/>
</dbReference>
<dbReference type="PIR" id="S69787">
    <property type="entry name" value="S69787"/>
</dbReference>
<dbReference type="RefSeq" id="NP_461796.1">
    <property type="nucleotide sequence ID" value="NC_003197.2"/>
</dbReference>
<dbReference type="RefSeq" id="WP_000432699.1">
    <property type="nucleotide sequence ID" value="NC_003197.2"/>
</dbReference>
<dbReference type="SMR" id="P0CL08"/>
<dbReference type="STRING" id="99287.STM2875"/>
<dbReference type="PaxDb" id="99287-STM2875"/>
<dbReference type="GeneID" id="1254398"/>
<dbReference type="KEGG" id="stm:STM2875"/>
<dbReference type="PATRIC" id="fig|99287.12.peg.3031"/>
<dbReference type="HOGENOM" id="CLU_000445_81_4_6"/>
<dbReference type="OMA" id="TIYCEEP"/>
<dbReference type="PhylomeDB" id="P0CL08"/>
<dbReference type="BioCyc" id="SENT99287:STM2875-MONOMER"/>
<dbReference type="PHI-base" id="PHI:11209"/>
<dbReference type="PHI-base" id="PHI:12207"/>
<dbReference type="PHI-base" id="PHI:635"/>
<dbReference type="PHI-base" id="PHI:7270"/>
<dbReference type="PHI-base" id="PHI:9084"/>
<dbReference type="PHI-base" id="PHI:9231"/>
<dbReference type="PHI-base" id="PHI:9522"/>
<dbReference type="Proteomes" id="UP000001014">
    <property type="component" value="Chromosome"/>
</dbReference>
<dbReference type="GO" id="GO:0003700">
    <property type="term" value="F:DNA-binding transcription factor activity"/>
    <property type="evidence" value="ECO:0007669"/>
    <property type="project" value="InterPro"/>
</dbReference>
<dbReference type="GO" id="GO:0043565">
    <property type="term" value="F:sequence-specific DNA binding"/>
    <property type="evidence" value="ECO:0007669"/>
    <property type="project" value="InterPro"/>
</dbReference>
<dbReference type="GO" id="GO:0044409">
    <property type="term" value="P:symbiont entry into host"/>
    <property type="evidence" value="ECO:0000315"/>
    <property type="project" value="UniProtKB"/>
</dbReference>
<dbReference type="Gene3D" id="1.10.10.60">
    <property type="entry name" value="Homeodomain-like"/>
    <property type="match status" value="1"/>
</dbReference>
<dbReference type="InterPro" id="IPR009057">
    <property type="entry name" value="Homeodomain-like_sf"/>
</dbReference>
<dbReference type="InterPro" id="IPR018060">
    <property type="entry name" value="HTH_AraC"/>
</dbReference>
<dbReference type="InterPro" id="IPR018062">
    <property type="entry name" value="HTH_AraC-typ_CS"/>
</dbReference>
<dbReference type="InterPro" id="IPR020449">
    <property type="entry name" value="Tscrpt_reg_AraC-type_HTH"/>
</dbReference>
<dbReference type="NCBIfam" id="NF011732">
    <property type="entry name" value="PRK15185.1"/>
    <property type="match status" value="1"/>
</dbReference>
<dbReference type="PANTHER" id="PTHR43280">
    <property type="entry name" value="ARAC-FAMILY TRANSCRIPTIONAL REGULATOR"/>
    <property type="match status" value="1"/>
</dbReference>
<dbReference type="PANTHER" id="PTHR43280:SF33">
    <property type="entry name" value="HTH-TYPE TRANSCRIPTIONAL REGULATOR APPY-RELATED"/>
    <property type="match status" value="1"/>
</dbReference>
<dbReference type="Pfam" id="PF12833">
    <property type="entry name" value="HTH_18"/>
    <property type="match status" value="1"/>
</dbReference>
<dbReference type="PRINTS" id="PR00032">
    <property type="entry name" value="HTHARAC"/>
</dbReference>
<dbReference type="SMART" id="SM00342">
    <property type="entry name" value="HTH_ARAC"/>
    <property type="match status" value="1"/>
</dbReference>
<dbReference type="SUPFAM" id="SSF46689">
    <property type="entry name" value="Homeodomain-like"/>
    <property type="match status" value="1"/>
</dbReference>
<dbReference type="PROSITE" id="PS00041">
    <property type="entry name" value="HTH_ARAC_FAMILY_1"/>
    <property type="match status" value="1"/>
</dbReference>
<dbReference type="PROSITE" id="PS01124">
    <property type="entry name" value="HTH_ARAC_FAMILY_2"/>
    <property type="match status" value="1"/>
</dbReference>
<sequence>MENVTFVSNSHQRPAADNLQKLKSLLTNTRQQIKSQTQQVTIKNLYVSSFTLVCFRSGKLTISNNHDTIYCDEPGMLVLKKEQVVNVTLEEVNGHMDFDILEIPTQRLGALYALIPNEQQTKMAVPTEKAQKIFYTPDFPARREVFEHLKTAFSCTKDTSKGCSNCNNKSCIENEELIPYFLLFLLTAFLRLPESYEIILSSAQITLKERVYNIISSSPSRQWKLTDVADHIFMSTSTLKRKLAEEGTSFSDIYLSARMNQAAKLLRIGNHNVNAVALKCGYDSTSYFIQCFKKYFKTTPSTFIKMANH</sequence>